<evidence type="ECO:0000250" key="1"/>
<evidence type="ECO:0000250" key="2">
    <source>
        <dbReference type="UniProtKB" id="O14979"/>
    </source>
</evidence>
<evidence type="ECO:0000255" key="3">
    <source>
        <dbReference type="PROSITE-ProRule" id="PRU00176"/>
    </source>
</evidence>
<evidence type="ECO:0000256" key="4">
    <source>
        <dbReference type="SAM" id="MobiDB-lite"/>
    </source>
</evidence>
<evidence type="ECO:0000269" key="5">
    <source>
    </source>
</evidence>
<evidence type="ECO:0000269" key="6">
    <source>
    </source>
</evidence>
<evidence type="ECO:0007744" key="7">
    <source>
    </source>
</evidence>
<organism>
    <name type="scientific">Mus musculus</name>
    <name type="common">Mouse</name>
    <dbReference type="NCBI Taxonomy" id="10090"/>
    <lineage>
        <taxon>Eukaryota</taxon>
        <taxon>Metazoa</taxon>
        <taxon>Chordata</taxon>
        <taxon>Craniata</taxon>
        <taxon>Vertebrata</taxon>
        <taxon>Euteleostomi</taxon>
        <taxon>Mammalia</taxon>
        <taxon>Eutheria</taxon>
        <taxon>Euarchontoglires</taxon>
        <taxon>Glires</taxon>
        <taxon>Rodentia</taxon>
        <taxon>Myomorpha</taxon>
        <taxon>Muroidea</taxon>
        <taxon>Muridae</taxon>
        <taxon>Murinae</taxon>
        <taxon>Mus</taxon>
        <taxon>Mus</taxon>
    </lineage>
</organism>
<feature type="chain" id="PRO_0000287240" description="Heterogeneous nuclear ribonucleoprotein D-like">
    <location>
        <begin position="1"/>
        <end position="301"/>
    </location>
</feature>
<feature type="domain" description="RRM 1" evidence="3">
    <location>
        <begin position="29"/>
        <end position="111"/>
    </location>
</feature>
<feature type="domain" description="RRM 2" evidence="3">
    <location>
        <begin position="114"/>
        <end position="193"/>
    </location>
</feature>
<feature type="region of interest" description="Disordered" evidence="4">
    <location>
        <begin position="194"/>
        <end position="229"/>
    </location>
</feature>
<feature type="region of interest" description="Necessary for interaction with TNPO1" evidence="1">
    <location>
        <begin position="223"/>
        <end position="301"/>
    </location>
</feature>
<feature type="region of interest" description="Disordered" evidence="4">
    <location>
        <begin position="279"/>
        <end position="301"/>
    </location>
</feature>
<feature type="compositionally biased region" description="Gly residues" evidence="4">
    <location>
        <begin position="204"/>
        <end position="223"/>
    </location>
</feature>
<feature type="modified residue" description="N6-methyllysine" evidence="2">
    <location>
        <position position="42"/>
    </location>
</feature>
<feature type="modified residue" description="N6-acetyllysine" evidence="2">
    <location>
        <position position="97"/>
    </location>
</feature>
<feature type="modified residue" description="Phosphoserine" evidence="2">
    <location>
        <position position="122"/>
    </location>
</feature>
<feature type="modified residue" description="Dimethylated arginine; alternate" evidence="2">
    <location>
        <position position="289"/>
    </location>
</feature>
<feature type="modified residue" description="Omega-N-methylarginine; alternate" evidence="7">
    <location>
        <position position="289"/>
    </location>
</feature>
<feature type="cross-link" description="Glycyl lysine isopeptide (Lys-Gly) (interchain with G-Cter in SUMO2)" evidence="2">
    <location>
        <position position="90"/>
    </location>
</feature>
<comment type="function">
    <text evidence="1 6">Acts as a transcriptional regulator. Promotes transcription repression (By similarity). Promotes transcription activation in differentiated myotubes. Binds to double- and single-stranded DNA sequences (By similarity). Binds to the transcription suppressor CATR sequence of the COX5B promoter. Binds with high affinity to RNA molecules that contain AU-rich elements (AREs) found within the 3'-UTR of many proto-oncogenes and cytokine mRNAs (By similarity). Binds both to nuclear and cytoplasmic poly(A) mRNAs (By similarity). Binds to poly(G) and poly(A), but not to poly(U) or poly(C) RNA homopolymers (By similarity). Binds to the 5'-ACUAGC-3' RNA consensus sequence (By similarity).</text>
</comment>
<comment type="subunit">
    <text evidence="1 6">Interacts with TNPO1 (By similarity). Interacts with ZNF148.</text>
</comment>
<comment type="subcellular location">
    <subcellularLocation>
        <location evidence="5 6">Nucleus</location>
    </subcellularLocation>
    <subcellularLocation>
        <location evidence="2">Cytoplasm</location>
    </subcellularLocation>
    <text evidence="2">Shuttles between the nucleus and the cytoplasm in a TNPO1-dependent manner.</text>
</comment>
<comment type="tissue specificity">
    <text evidence="5">Expressed in skeletal muscle, myoblast, myotube, heart, brain, liver, kidney, heart, lung, stomach, small intestine, large intestine, spleen, and testis (at protein level). Expressed in brain, skeletal muscle, heart, lung, liver, stomach, small intestine, large intestine, kidney, spleen and testis.</text>
</comment>
<comment type="PTM">
    <text evidence="1">Dimethylation of Arg-289 is probably of the asymmetric type.</text>
</comment>
<reference key="1">
    <citation type="journal article" date="2000" name="Gene">
        <title>Molecular characterization of a mouse heterogeneous nuclear ribonucleoprotein D-like protein JKTBP and its tissue-specific expression.</title>
        <authorList>
            <person name="Akagi T."/>
            <person name="Kamei D."/>
            <person name="Tsuchiya N."/>
            <person name="Nishina Y."/>
            <person name="Horiguchi H."/>
            <person name="Matsui M."/>
            <person name="Kamma H."/>
            <person name="Yamada M."/>
        </authorList>
    </citation>
    <scope>NUCLEOTIDE SEQUENCE [MRNA]</scope>
    <scope>TISSUE SPECIFICITY</scope>
    <scope>SUBCELLULAR LOCATION</scope>
    <source>
        <tissue>Testis</tissue>
    </source>
</reference>
<reference key="2">
    <citation type="journal article" date="2005" name="Science">
        <title>The transcriptional landscape of the mammalian genome.</title>
        <authorList>
            <person name="Carninci P."/>
            <person name="Kasukawa T."/>
            <person name="Katayama S."/>
            <person name="Gough J."/>
            <person name="Frith M.C."/>
            <person name="Maeda N."/>
            <person name="Oyama R."/>
            <person name="Ravasi T."/>
            <person name="Lenhard B."/>
            <person name="Wells C."/>
            <person name="Kodzius R."/>
            <person name="Shimokawa K."/>
            <person name="Bajic V.B."/>
            <person name="Brenner S.E."/>
            <person name="Batalov S."/>
            <person name="Forrest A.R."/>
            <person name="Zavolan M."/>
            <person name="Davis M.J."/>
            <person name="Wilming L.G."/>
            <person name="Aidinis V."/>
            <person name="Allen J.E."/>
            <person name="Ambesi-Impiombato A."/>
            <person name="Apweiler R."/>
            <person name="Aturaliya R.N."/>
            <person name="Bailey T.L."/>
            <person name="Bansal M."/>
            <person name="Baxter L."/>
            <person name="Beisel K.W."/>
            <person name="Bersano T."/>
            <person name="Bono H."/>
            <person name="Chalk A.M."/>
            <person name="Chiu K.P."/>
            <person name="Choudhary V."/>
            <person name="Christoffels A."/>
            <person name="Clutterbuck D.R."/>
            <person name="Crowe M.L."/>
            <person name="Dalla E."/>
            <person name="Dalrymple B.P."/>
            <person name="de Bono B."/>
            <person name="Della Gatta G."/>
            <person name="di Bernardo D."/>
            <person name="Down T."/>
            <person name="Engstrom P."/>
            <person name="Fagiolini M."/>
            <person name="Faulkner G."/>
            <person name="Fletcher C.F."/>
            <person name="Fukushima T."/>
            <person name="Furuno M."/>
            <person name="Futaki S."/>
            <person name="Gariboldi M."/>
            <person name="Georgii-Hemming P."/>
            <person name="Gingeras T.R."/>
            <person name="Gojobori T."/>
            <person name="Green R.E."/>
            <person name="Gustincich S."/>
            <person name="Harbers M."/>
            <person name="Hayashi Y."/>
            <person name="Hensch T.K."/>
            <person name="Hirokawa N."/>
            <person name="Hill D."/>
            <person name="Huminiecki L."/>
            <person name="Iacono M."/>
            <person name="Ikeo K."/>
            <person name="Iwama A."/>
            <person name="Ishikawa T."/>
            <person name="Jakt M."/>
            <person name="Kanapin A."/>
            <person name="Katoh M."/>
            <person name="Kawasawa Y."/>
            <person name="Kelso J."/>
            <person name="Kitamura H."/>
            <person name="Kitano H."/>
            <person name="Kollias G."/>
            <person name="Krishnan S.P."/>
            <person name="Kruger A."/>
            <person name="Kummerfeld S.K."/>
            <person name="Kurochkin I.V."/>
            <person name="Lareau L.F."/>
            <person name="Lazarevic D."/>
            <person name="Lipovich L."/>
            <person name="Liu J."/>
            <person name="Liuni S."/>
            <person name="McWilliam S."/>
            <person name="Madan Babu M."/>
            <person name="Madera M."/>
            <person name="Marchionni L."/>
            <person name="Matsuda H."/>
            <person name="Matsuzawa S."/>
            <person name="Miki H."/>
            <person name="Mignone F."/>
            <person name="Miyake S."/>
            <person name="Morris K."/>
            <person name="Mottagui-Tabar S."/>
            <person name="Mulder N."/>
            <person name="Nakano N."/>
            <person name="Nakauchi H."/>
            <person name="Ng P."/>
            <person name="Nilsson R."/>
            <person name="Nishiguchi S."/>
            <person name="Nishikawa S."/>
            <person name="Nori F."/>
            <person name="Ohara O."/>
            <person name="Okazaki Y."/>
            <person name="Orlando V."/>
            <person name="Pang K.C."/>
            <person name="Pavan W.J."/>
            <person name="Pavesi G."/>
            <person name="Pesole G."/>
            <person name="Petrovsky N."/>
            <person name="Piazza S."/>
            <person name="Reed J."/>
            <person name="Reid J.F."/>
            <person name="Ring B.Z."/>
            <person name="Ringwald M."/>
            <person name="Rost B."/>
            <person name="Ruan Y."/>
            <person name="Salzberg S.L."/>
            <person name="Sandelin A."/>
            <person name="Schneider C."/>
            <person name="Schoenbach C."/>
            <person name="Sekiguchi K."/>
            <person name="Semple C.A."/>
            <person name="Seno S."/>
            <person name="Sessa L."/>
            <person name="Sheng Y."/>
            <person name="Shibata Y."/>
            <person name="Shimada H."/>
            <person name="Shimada K."/>
            <person name="Silva D."/>
            <person name="Sinclair B."/>
            <person name="Sperling S."/>
            <person name="Stupka E."/>
            <person name="Sugiura K."/>
            <person name="Sultana R."/>
            <person name="Takenaka Y."/>
            <person name="Taki K."/>
            <person name="Tammoja K."/>
            <person name="Tan S.L."/>
            <person name="Tang S."/>
            <person name="Taylor M.S."/>
            <person name="Tegner J."/>
            <person name="Teichmann S.A."/>
            <person name="Ueda H.R."/>
            <person name="van Nimwegen E."/>
            <person name="Verardo R."/>
            <person name="Wei C.L."/>
            <person name="Yagi K."/>
            <person name="Yamanishi H."/>
            <person name="Zabarovsky E."/>
            <person name="Zhu S."/>
            <person name="Zimmer A."/>
            <person name="Hide W."/>
            <person name="Bult C."/>
            <person name="Grimmond S.M."/>
            <person name="Teasdale R.D."/>
            <person name="Liu E.T."/>
            <person name="Brusic V."/>
            <person name="Quackenbush J."/>
            <person name="Wahlestedt C."/>
            <person name="Mattick J.S."/>
            <person name="Hume D.A."/>
            <person name="Kai C."/>
            <person name="Sasaki D."/>
            <person name="Tomaru Y."/>
            <person name="Fukuda S."/>
            <person name="Kanamori-Katayama M."/>
            <person name="Suzuki M."/>
            <person name="Aoki J."/>
            <person name="Arakawa T."/>
            <person name="Iida J."/>
            <person name="Imamura K."/>
            <person name="Itoh M."/>
            <person name="Kato T."/>
            <person name="Kawaji H."/>
            <person name="Kawagashira N."/>
            <person name="Kawashima T."/>
            <person name="Kojima M."/>
            <person name="Kondo S."/>
            <person name="Konno H."/>
            <person name="Nakano K."/>
            <person name="Ninomiya N."/>
            <person name="Nishio T."/>
            <person name="Okada M."/>
            <person name="Plessy C."/>
            <person name="Shibata K."/>
            <person name="Shiraki T."/>
            <person name="Suzuki S."/>
            <person name="Tagami M."/>
            <person name="Waki K."/>
            <person name="Watahiki A."/>
            <person name="Okamura-Oho Y."/>
            <person name="Suzuki H."/>
            <person name="Kawai J."/>
            <person name="Hayashizaki Y."/>
        </authorList>
    </citation>
    <scope>NUCLEOTIDE SEQUENCE [LARGE SCALE MRNA]</scope>
    <source>
        <strain>C57BL/6J</strain>
        <strain>NOD</strain>
        <tissue>Embryo</tissue>
        <tissue>Spleen</tissue>
    </source>
</reference>
<reference key="3">
    <citation type="journal article" date="2004" name="Genome Res.">
        <title>The status, quality, and expansion of the NIH full-length cDNA project: the Mammalian Gene Collection (MGC).</title>
        <authorList>
            <consortium name="The MGC Project Team"/>
        </authorList>
    </citation>
    <scope>NUCLEOTIDE SEQUENCE [LARGE SCALE MRNA]</scope>
    <source>
        <strain>Czech II</strain>
        <tissue>Mammary tumor</tissue>
    </source>
</reference>
<reference key="4">
    <citation type="journal article" date="2004" name="J. Biol. Chem.">
        <title>Regulation of murine cytochrome c oxidase Vb gene expression during myogenesis: YY-1 and heterogeneous nuclear ribonucleoprotein D-like protein (JKTBP1) reciprocally regulate transcription activity by physical interaction with the BERF-1/ZBP-89 factor.</title>
        <authorList>
            <person name="Boopathi E."/>
            <person name="Lenka N."/>
            <person name="Prabu S.K."/>
            <person name="Fang J.-K."/>
            <person name="Wilkinson F."/>
            <person name="Atchison M."/>
            <person name="Giallongo A."/>
            <person name="Avadhani N.G."/>
        </authorList>
    </citation>
    <scope>PROTEIN SEQUENCE OF 1-13</scope>
    <scope>FUNCTION</scope>
    <scope>INTERACTION WITH ZNF148</scope>
    <scope>SUBCELLULAR LOCATION</scope>
    <scope>DNA-BINDING</scope>
    <source>
        <tissue>Myotube</tissue>
    </source>
</reference>
<reference key="5">
    <citation type="journal article" date="2010" name="Cell">
        <title>A tissue-specific atlas of mouse protein phosphorylation and expression.</title>
        <authorList>
            <person name="Huttlin E.L."/>
            <person name="Jedrychowski M.P."/>
            <person name="Elias J.E."/>
            <person name="Goswami T."/>
            <person name="Rad R."/>
            <person name="Beausoleil S.A."/>
            <person name="Villen J."/>
            <person name="Haas W."/>
            <person name="Sowa M.E."/>
            <person name="Gygi S.P."/>
        </authorList>
    </citation>
    <scope>IDENTIFICATION BY MASS SPECTROMETRY [LARGE SCALE ANALYSIS]</scope>
    <source>
        <tissue>Brain</tissue>
        <tissue>Heart</tissue>
        <tissue>Kidney</tissue>
        <tissue>Liver</tissue>
        <tissue>Lung</tissue>
        <tissue>Pancreas</tissue>
        <tissue>Spleen</tissue>
        <tissue>Testis</tissue>
    </source>
</reference>
<reference key="6">
    <citation type="journal article" date="2014" name="Mol. Cell. Proteomics">
        <title>Immunoaffinity enrichment and mass spectrometry analysis of protein methylation.</title>
        <authorList>
            <person name="Guo A."/>
            <person name="Gu H."/>
            <person name="Zhou J."/>
            <person name="Mulhern D."/>
            <person name="Wang Y."/>
            <person name="Lee K.A."/>
            <person name="Yang V."/>
            <person name="Aguiar M."/>
            <person name="Kornhauser J."/>
            <person name="Jia X."/>
            <person name="Ren J."/>
            <person name="Beausoleil S.A."/>
            <person name="Silva J.C."/>
            <person name="Vemulapalli V."/>
            <person name="Bedford M.T."/>
            <person name="Comb M.J."/>
        </authorList>
    </citation>
    <scope>METHYLATION [LARGE SCALE ANALYSIS] AT ARG-289</scope>
    <scope>IDENTIFICATION BY MASS SPECTROMETRY [LARGE SCALE ANALYSIS]</scope>
    <source>
        <tissue>Brain</tissue>
        <tissue>Embryo</tissue>
    </source>
</reference>
<name>HNRDL_MOUSE</name>
<keyword id="KW-0007">Acetylation</keyword>
<keyword id="KW-0010">Activator</keyword>
<keyword id="KW-0963">Cytoplasm</keyword>
<keyword id="KW-0903">Direct protein sequencing</keyword>
<keyword id="KW-0238">DNA-binding</keyword>
<keyword id="KW-1017">Isopeptide bond</keyword>
<keyword id="KW-0488">Methylation</keyword>
<keyword id="KW-0539">Nucleus</keyword>
<keyword id="KW-0597">Phosphoprotein</keyword>
<keyword id="KW-1185">Reference proteome</keyword>
<keyword id="KW-0677">Repeat</keyword>
<keyword id="KW-0678">Repressor</keyword>
<keyword id="KW-0694">RNA-binding</keyword>
<keyword id="KW-0804">Transcription</keyword>
<keyword id="KW-0805">Transcription regulation</keyword>
<keyword id="KW-0832">Ubl conjugation</keyword>
<dbReference type="EMBL" id="AB017020">
    <property type="protein sequence ID" value="BAA75479.1"/>
    <property type="molecule type" value="mRNA"/>
</dbReference>
<dbReference type="EMBL" id="AK011581">
    <property type="protein sequence ID" value="BAB27715.1"/>
    <property type="molecule type" value="mRNA"/>
</dbReference>
<dbReference type="EMBL" id="AK172629">
    <property type="protein sequence ID" value="BAE43104.1"/>
    <property type="molecule type" value="mRNA"/>
</dbReference>
<dbReference type="EMBL" id="BC021374">
    <property type="protein sequence ID" value="AAH21374.1"/>
    <property type="molecule type" value="mRNA"/>
</dbReference>
<dbReference type="SMR" id="Q9Z130"/>
<dbReference type="FunCoup" id="Q9Z130">
    <property type="interactions" value="3192"/>
</dbReference>
<dbReference type="IntAct" id="Q9Z130">
    <property type="interactions" value="6"/>
</dbReference>
<dbReference type="MINT" id="Q9Z130"/>
<dbReference type="STRING" id="10090.ENSMUSP00000121005"/>
<dbReference type="GlyGen" id="Q9Z130">
    <property type="glycosylation" value="1 site, 1 O-linked glycan (1 site)"/>
</dbReference>
<dbReference type="iPTMnet" id="Q9Z130"/>
<dbReference type="PhosphoSitePlus" id="Q9Z130"/>
<dbReference type="SwissPalm" id="Q9Z130"/>
<dbReference type="jPOST" id="Q9Z130"/>
<dbReference type="PaxDb" id="10090-ENSMUSP00000121005"/>
<dbReference type="PeptideAtlas" id="Q9Z130"/>
<dbReference type="ProteomicsDB" id="269610"/>
<dbReference type="Pumba" id="Q9Z130"/>
<dbReference type="AGR" id="MGI:1355299"/>
<dbReference type="MGI" id="MGI:1355299">
    <property type="gene designation" value="Hnrnpdl"/>
</dbReference>
<dbReference type="eggNOG" id="KOG0118">
    <property type="taxonomic scope" value="Eukaryota"/>
</dbReference>
<dbReference type="InParanoid" id="Q9Z130"/>
<dbReference type="CD-CODE" id="DE1E139C">
    <property type="entry name" value="Chromatoid body"/>
</dbReference>
<dbReference type="ChiTaRS" id="Hnrnpdl">
    <property type="organism name" value="mouse"/>
</dbReference>
<dbReference type="PRO" id="PR:Q9Z130"/>
<dbReference type="Proteomes" id="UP000000589">
    <property type="component" value="Unplaced"/>
</dbReference>
<dbReference type="RNAct" id="Q9Z130">
    <property type="molecule type" value="protein"/>
</dbReference>
<dbReference type="GO" id="GO:0005737">
    <property type="term" value="C:cytoplasm"/>
    <property type="evidence" value="ECO:0007669"/>
    <property type="project" value="UniProtKB-SubCell"/>
</dbReference>
<dbReference type="GO" id="GO:0005634">
    <property type="term" value="C:nucleus"/>
    <property type="evidence" value="ECO:0000314"/>
    <property type="project" value="MGI"/>
</dbReference>
<dbReference type="GO" id="GO:0045202">
    <property type="term" value="C:synapse"/>
    <property type="evidence" value="ECO:0000314"/>
    <property type="project" value="SynGO"/>
</dbReference>
<dbReference type="GO" id="GO:0003677">
    <property type="term" value="F:DNA binding"/>
    <property type="evidence" value="ECO:0000266"/>
    <property type="project" value="MGI"/>
</dbReference>
<dbReference type="GO" id="GO:0003723">
    <property type="term" value="F:RNA binding"/>
    <property type="evidence" value="ECO:0000266"/>
    <property type="project" value="MGI"/>
</dbReference>
<dbReference type="GO" id="GO:0016071">
    <property type="term" value="P:mRNA metabolic process"/>
    <property type="evidence" value="ECO:0000266"/>
    <property type="project" value="MGI"/>
</dbReference>
<dbReference type="CDD" id="cd12758">
    <property type="entry name" value="RRM1_hnRPDL"/>
    <property type="match status" value="1"/>
</dbReference>
<dbReference type="CDD" id="cd12585">
    <property type="entry name" value="RRM2_hnRPDL"/>
    <property type="match status" value="1"/>
</dbReference>
<dbReference type="FunFam" id="3.30.70.330:FF:000220">
    <property type="entry name" value="Heterogeneous nuclear ribonucleoprotein D-like protein"/>
    <property type="match status" value="1"/>
</dbReference>
<dbReference type="FunFam" id="3.30.70.330:FF:000030">
    <property type="entry name" value="Heterogeneous nuclear ribonucleoprotein d0 isoform"/>
    <property type="match status" value="1"/>
</dbReference>
<dbReference type="Gene3D" id="3.30.70.330">
    <property type="match status" value="2"/>
</dbReference>
<dbReference type="InterPro" id="IPR034847">
    <property type="entry name" value="hnRPDL_RRM1"/>
</dbReference>
<dbReference type="InterPro" id="IPR012677">
    <property type="entry name" value="Nucleotide-bd_a/b_plait_sf"/>
</dbReference>
<dbReference type="InterPro" id="IPR035979">
    <property type="entry name" value="RBD_domain_sf"/>
</dbReference>
<dbReference type="InterPro" id="IPR000504">
    <property type="entry name" value="RRM_dom"/>
</dbReference>
<dbReference type="PANTHER" id="PTHR48033:SF2">
    <property type="entry name" value="HETEROGENEOUS NUCLEAR RIBONUCLEOPROTEIN D-LIKE"/>
    <property type="match status" value="1"/>
</dbReference>
<dbReference type="PANTHER" id="PTHR48033">
    <property type="entry name" value="RNA-BINDING (RRM/RBD/RNP MOTIFS) FAMILY PROTEIN"/>
    <property type="match status" value="1"/>
</dbReference>
<dbReference type="Pfam" id="PF00076">
    <property type="entry name" value="RRM_1"/>
    <property type="match status" value="2"/>
</dbReference>
<dbReference type="SMART" id="SM00360">
    <property type="entry name" value="RRM"/>
    <property type="match status" value="2"/>
</dbReference>
<dbReference type="SUPFAM" id="SSF54928">
    <property type="entry name" value="RNA-binding domain, RBD"/>
    <property type="match status" value="2"/>
</dbReference>
<dbReference type="PROSITE" id="PS50102">
    <property type="entry name" value="RRM"/>
    <property type="match status" value="2"/>
</dbReference>
<gene>
    <name type="primary">Hnrnpdl</name>
    <name type="synonym">Hnrpdl</name>
    <name type="synonym">Jktbp</name>
</gene>
<accession>Q9Z130</accession>
<accession>Q9CT01</accession>
<protein>
    <recommendedName>
        <fullName>Heterogeneous nuclear ribonucleoprotein D-like</fullName>
        <shortName>hnRNP D-like</shortName>
        <shortName>hnRNP DL</shortName>
    </recommendedName>
    <alternativeName>
        <fullName>JKT41-binding protein</fullName>
    </alternativeName>
</protein>
<sequence>MEDMNEYSNIEEFAEGSKINASKNQQDDGKMFIGGLSWDTSKKDLTEYLSRFGEVVDCTIKTDPVTGRSRGFGFVLFKDAASVDKVLELKEHKLDGKLIDPKRAKALKGKEPPKKVFVGGLSPDTSEEQIKEYFGAFGEIENIELPMDTKTNERRGFCFITYTDEEPVKKLLESRYHQIGSGKCEIKVAQPKEVYRQQQQQQKGGRGAAAGGRGGARGRGRGQGQNWNQGFNNYYDQGYGNYNSAYGGDQNYSGYGGYDYTGYNYGNYGYGQGYADYSGQQSTYGKASRGGGNHQNNYQPY</sequence>
<proteinExistence type="evidence at protein level"/>